<keyword id="KW-1185">Reference proteome</keyword>
<organism>
    <name type="scientific">Acanthamoeba polyphaga mimivirus</name>
    <name type="common">APMV</name>
    <dbReference type="NCBI Taxonomy" id="212035"/>
    <lineage>
        <taxon>Viruses</taxon>
        <taxon>Varidnaviria</taxon>
        <taxon>Bamfordvirae</taxon>
        <taxon>Nucleocytoviricota</taxon>
        <taxon>Megaviricetes</taxon>
        <taxon>Imitervirales</taxon>
        <taxon>Mimiviridae</taxon>
        <taxon>Megamimivirinae</taxon>
        <taxon>Mimivirus</taxon>
        <taxon>Mimivirus bradfordmassiliense</taxon>
    </lineage>
</organism>
<gene>
    <name type="ordered locus">MIMI_R680</name>
</gene>
<protein>
    <recommendedName>
        <fullName>Uncharacterized protein R680</fullName>
    </recommendedName>
</protein>
<accession>Q5UNT6</accession>
<organismHost>
    <name type="scientific">Acanthamoeba polyphaga</name>
    <name type="common">Amoeba</name>
    <dbReference type="NCBI Taxonomy" id="5757"/>
</organismHost>
<proteinExistence type="predicted"/>
<feature type="chain" id="PRO_0000071312" description="Uncharacterized protein R680">
    <location>
        <begin position="1"/>
        <end position="111"/>
    </location>
</feature>
<dbReference type="EMBL" id="AY653733">
    <property type="protein sequence ID" value="AAV50941.1"/>
    <property type="molecule type" value="Genomic_DNA"/>
</dbReference>
<dbReference type="KEGG" id="vg:9925328"/>
<dbReference type="Proteomes" id="UP000001134">
    <property type="component" value="Genome"/>
</dbReference>
<name>YR680_MIMIV</name>
<sequence length="111" mass="13152">MINNPISNNIFSQNNCLLKTIFTNSKINILSIKDVYGNCWYMLSDISSTFLIRQRKIKKIITKDNLDNFKHLCINLTKNQKKYYQTKYYIKNKTLFVNNKGIFTLIPFSKN</sequence>
<reference key="1">
    <citation type="journal article" date="2004" name="Science">
        <title>The 1.2-megabase genome sequence of Mimivirus.</title>
        <authorList>
            <person name="Raoult D."/>
            <person name="Audic S."/>
            <person name="Robert C."/>
            <person name="Abergel C."/>
            <person name="Renesto P."/>
            <person name="Ogata H."/>
            <person name="La Scola B."/>
            <person name="Susan M."/>
            <person name="Claverie J.-M."/>
        </authorList>
    </citation>
    <scope>NUCLEOTIDE SEQUENCE [LARGE SCALE GENOMIC DNA]</scope>
    <source>
        <strain>Rowbotham-Bradford</strain>
    </source>
</reference>